<sequence length="151" mass="16348">MKVILKENIDTLGHIGDIVKVAPGYARNYLLPKGLAVEATEKNAKALEHVKRQMAYRKDKVTQAAKLLLAKLEGITVELVHQAGVEGKLFGSVTNMEIAAFLKEKGVDIDRKKIALAEPIKQVGEYSVPVKLHPEVTASLKVNVSAPAAAE</sequence>
<keyword id="KW-1185">Reference proteome</keyword>
<keyword id="KW-0687">Ribonucleoprotein</keyword>
<keyword id="KW-0689">Ribosomal protein</keyword>
<keyword id="KW-0694">RNA-binding</keyword>
<keyword id="KW-0699">rRNA-binding</keyword>
<protein>
    <recommendedName>
        <fullName evidence="1">Large ribosomal subunit protein bL9</fullName>
    </recommendedName>
    <alternativeName>
        <fullName evidence="2">50S ribosomal protein L9</fullName>
    </alternativeName>
</protein>
<proteinExistence type="inferred from homology"/>
<organism>
    <name type="scientific">Pelobacter propionicus (strain DSM 2379 / NBRC 103807 / OttBd1)</name>
    <dbReference type="NCBI Taxonomy" id="338966"/>
    <lineage>
        <taxon>Bacteria</taxon>
        <taxon>Pseudomonadati</taxon>
        <taxon>Thermodesulfobacteriota</taxon>
        <taxon>Desulfuromonadia</taxon>
        <taxon>Desulfuromonadales</taxon>
        <taxon>Desulfuromonadaceae</taxon>
        <taxon>Pelobacter</taxon>
    </lineage>
</organism>
<feature type="chain" id="PRO_1000014828" description="Large ribosomal subunit protein bL9">
    <location>
        <begin position="1"/>
        <end position="151"/>
    </location>
</feature>
<reference key="1">
    <citation type="submission" date="2006-10" db="EMBL/GenBank/DDBJ databases">
        <title>Complete sequence of chromosome of Pelobacter propionicus DSM 2379.</title>
        <authorList>
            <consortium name="US DOE Joint Genome Institute"/>
            <person name="Copeland A."/>
            <person name="Lucas S."/>
            <person name="Lapidus A."/>
            <person name="Barry K."/>
            <person name="Detter J.C."/>
            <person name="Glavina del Rio T."/>
            <person name="Hammon N."/>
            <person name="Israni S."/>
            <person name="Dalin E."/>
            <person name="Tice H."/>
            <person name="Pitluck S."/>
            <person name="Saunders E."/>
            <person name="Brettin T."/>
            <person name="Bruce D."/>
            <person name="Han C."/>
            <person name="Tapia R."/>
            <person name="Schmutz J."/>
            <person name="Larimer F."/>
            <person name="Land M."/>
            <person name="Hauser L."/>
            <person name="Kyrpides N."/>
            <person name="Kim E."/>
            <person name="Lovley D."/>
            <person name="Richardson P."/>
        </authorList>
    </citation>
    <scope>NUCLEOTIDE SEQUENCE [LARGE SCALE GENOMIC DNA]</scope>
    <source>
        <strain>DSM 2379 / NBRC 103807 / OttBd1</strain>
    </source>
</reference>
<dbReference type="EMBL" id="CP000482">
    <property type="protein sequence ID" value="ABK98391.1"/>
    <property type="molecule type" value="Genomic_DNA"/>
</dbReference>
<dbReference type="RefSeq" id="WP_011734703.1">
    <property type="nucleotide sequence ID" value="NC_008609.1"/>
</dbReference>
<dbReference type="SMR" id="A1AM21"/>
<dbReference type="STRING" id="338966.Ppro_0761"/>
<dbReference type="KEGG" id="ppd:Ppro_0761"/>
<dbReference type="eggNOG" id="COG0359">
    <property type="taxonomic scope" value="Bacteria"/>
</dbReference>
<dbReference type="HOGENOM" id="CLU_078938_3_0_7"/>
<dbReference type="OrthoDB" id="9788336at2"/>
<dbReference type="Proteomes" id="UP000006732">
    <property type="component" value="Chromosome"/>
</dbReference>
<dbReference type="GO" id="GO:1990904">
    <property type="term" value="C:ribonucleoprotein complex"/>
    <property type="evidence" value="ECO:0007669"/>
    <property type="project" value="UniProtKB-KW"/>
</dbReference>
<dbReference type="GO" id="GO:0005840">
    <property type="term" value="C:ribosome"/>
    <property type="evidence" value="ECO:0007669"/>
    <property type="project" value="UniProtKB-KW"/>
</dbReference>
<dbReference type="GO" id="GO:0019843">
    <property type="term" value="F:rRNA binding"/>
    <property type="evidence" value="ECO:0007669"/>
    <property type="project" value="UniProtKB-UniRule"/>
</dbReference>
<dbReference type="GO" id="GO:0003735">
    <property type="term" value="F:structural constituent of ribosome"/>
    <property type="evidence" value="ECO:0007669"/>
    <property type="project" value="InterPro"/>
</dbReference>
<dbReference type="GO" id="GO:0006412">
    <property type="term" value="P:translation"/>
    <property type="evidence" value="ECO:0007669"/>
    <property type="project" value="UniProtKB-UniRule"/>
</dbReference>
<dbReference type="FunFam" id="3.10.430.100:FF:000006">
    <property type="entry name" value="50S ribosomal protein L9"/>
    <property type="match status" value="1"/>
</dbReference>
<dbReference type="FunFam" id="3.40.5.10:FF:000003">
    <property type="entry name" value="50S ribosomal protein L9"/>
    <property type="match status" value="1"/>
</dbReference>
<dbReference type="Gene3D" id="3.10.430.100">
    <property type="entry name" value="Ribosomal protein L9, C-terminal domain"/>
    <property type="match status" value="1"/>
</dbReference>
<dbReference type="Gene3D" id="3.40.5.10">
    <property type="entry name" value="Ribosomal protein L9, N-terminal domain"/>
    <property type="match status" value="1"/>
</dbReference>
<dbReference type="HAMAP" id="MF_00503">
    <property type="entry name" value="Ribosomal_bL9"/>
    <property type="match status" value="1"/>
</dbReference>
<dbReference type="InterPro" id="IPR000244">
    <property type="entry name" value="Ribosomal_bL9"/>
</dbReference>
<dbReference type="InterPro" id="IPR009027">
    <property type="entry name" value="Ribosomal_bL9/RNase_H1_N"/>
</dbReference>
<dbReference type="InterPro" id="IPR020594">
    <property type="entry name" value="Ribosomal_bL9_bac/chp"/>
</dbReference>
<dbReference type="InterPro" id="IPR020069">
    <property type="entry name" value="Ribosomal_bL9_C"/>
</dbReference>
<dbReference type="InterPro" id="IPR036791">
    <property type="entry name" value="Ribosomal_bL9_C_sf"/>
</dbReference>
<dbReference type="InterPro" id="IPR020070">
    <property type="entry name" value="Ribosomal_bL9_N"/>
</dbReference>
<dbReference type="InterPro" id="IPR036935">
    <property type="entry name" value="Ribosomal_bL9_N_sf"/>
</dbReference>
<dbReference type="NCBIfam" id="TIGR00158">
    <property type="entry name" value="L9"/>
    <property type="match status" value="1"/>
</dbReference>
<dbReference type="PANTHER" id="PTHR21368">
    <property type="entry name" value="50S RIBOSOMAL PROTEIN L9"/>
    <property type="match status" value="1"/>
</dbReference>
<dbReference type="Pfam" id="PF03948">
    <property type="entry name" value="Ribosomal_L9_C"/>
    <property type="match status" value="1"/>
</dbReference>
<dbReference type="Pfam" id="PF01281">
    <property type="entry name" value="Ribosomal_L9_N"/>
    <property type="match status" value="1"/>
</dbReference>
<dbReference type="SUPFAM" id="SSF55658">
    <property type="entry name" value="L9 N-domain-like"/>
    <property type="match status" value="1"/>
</dbReference>
<dbReference type="SUPFAM" id="SSF55653">
    <property type="entry name" value="Ribosomal protein L9 C-domain"/>
    <property type="match status" value="1"/>
</dbReference>
<dbReference type="PROSITE" id="PS00651">
    <property type="entry name" value="RIBOSOMAL_L9"/>
    <property type="match status" value="1"/>
</dbReference>
<accession>A1AM21</accession>
<evidence type="ECO:0000255" key="1">
    <source>
        <dbReference type="HAMAP-Rule" id="MF_00503"/>
    </source>
</evidence>
<evidence type="ECO:0000305" key="2"/>
<name>RL9_PELPD</name>
<gene>
    <name evidence="1" type="primary">rplI</name>
    <name type="ordered locus">Ppro_0761</name>
</gene>
<comment type="function">
    <text evidence="1">Binds to the 23S rRNA.</text>
</comment>
<comment type="similarity">
    <text evidence="1">Belongs to the bacterial ribosomal protein bL9 family.</text>
</comment>